<proteinExistence type="inferred from homology"/>
<feature type="chain" id="PRO_1000148846" description="Transcriptional regulator MraZ">
    <location>
        <begin position="1"/>
        <end position="143"/>
    </location>
</feature>
<feature type="domain" description="SpoVT-AbrB 1" evidence="2">
    <location>
        <begin position="5"/>
        <end position="47"/>
    </location>
</feature>
<feature type="domain" description="SpoVT-AbrB 2" evidence="2">
    <location>
        <begin position="76"/>
        <end position="119"/>
    </location>
</feature>
<protein>
    <recommendedName>
        <fullName>Transcriptional regulator MraZ</fullName>
    </recommendedName>
</protein>
<accession>B9MQ92</accession>
<keyword id="KW-0963">Cytoplasm</keyword>
<keyword id="KW-0238">DNA-binding</keyword>
<keyword id="KW-0677">Repeat</keyword>
<keyword id="KW-0804">Transcription</keyword>
<keyword id="KW-0805">Transcription regulation</keyword>
<comment type="subunit">
    <text evidence="1">Forms oligomers.</text>
</comment>
<comment type="subcellular location">
    <subcellularLocation>
        <location evidence="1">Cytoplasm</location>
        <location evidence="1">Nucleoid</location>
    </subcellularLocation>
</comment>
<comment type="similarity">
    <text evidence="1">Belongs to the MraZ family.</text>
</comment>
<organism>
    <name type="scientific">Caldicellulosiruptor bescii (strain ATCC BAA-1888 / DSM 6725 / KCTC 15123 / Z-1320)</name>
    <name type="common">Anaerocellum thermophilum</name>
    <dbReference type="NCBI Taxonomy" id="521460"/>
    <lineage>
        <taxon>Bacteria</taxon>
        <taxon>Bacillati</taxon>
        <taxon>Bacillota</taxon>
        <taxon>Bacillota incertae sedis</taxon>
        <taxon>Caldicellulosiruptorales</taxon>
        <taxon>Caldicellulosiruptoraceae</taxon>
        <taxon>Caldicellulosiruptor</taxon>
    </lineage>
</organism>
<name>MRAZ_CALBD</name>
<dbReference type="EMBL" id="CP001393">
    <property type="protein sequence ID" value="ACM59884.1"/>
    <property type="molecule type" value="Genomic_DNA"/>
</dbReference>
<dbReference type="RefSeq" id="WP_015907322.1">
    <property type="nucleotide sequence ID" value="NC_012034.1"/>
</dbReference>
<dbReference type="SMR" id="B9MQ92"/>
<dbReference type="STRING" id="521460.Athe_0769"/>
<dbReference type="GeneID" id="31772124"/>
<dbReference type="KEGG" id="ate:Athe_0769"/>
<dbReference type="eggNOG" id="COG2001">
    <property type="taxonomic scope" value="Bacteria"/>
</dbReference>
<dbReference type="HOGENOM" id="CLU_107907_0_5_9"/>
<dbReference type="Proteomes" id="UP000007723">
    <property type="component" value="Chromosome"/>
</dbReference>
<dbReference type="GO" id="GO:0005737">
    <property type="term" value="C:cytoplasm"/>
    <property type="evidence" value="ECO:0007669"/>
    <property type="project" value="UniProtKB-UniRule"/>
</dbReference>
<dbReference type="GO" id="GO:0009295">
    <property type="term" value="C:nucleoid"/>
    <property type="evidence" value="ECO:0007669"/>
    <property type="project" value="UniProtKB-SubCell"/>
</dbReference>
<dbReference type="GO" id="GO:0003700">
    <property type="term" value="F:DNA-binding transcription factor activity"/>
    <property type="evidence" value="ECO:0007669"/>
    <property type="project" value="UniProtKB-UniRule"/>
</dbReference>
<dbReference type="GO" id="GO:0000976">
    <property type="term" value="F:transcription cis-regulatory region binding"/>
    <property type="evidence" value="ECO:0007669"/>
    <property type="project" value="TreeGrafter"/>
</dbReference>
<dbReference type="GO" id="GO:2000143">
    <property type="term" value="P:negative regulation of DNA-templated transcription initiation"/>
    <property type="evidence" value="ECO:0007669"/>
    <property type="project" value="TreeGrafter"/>
</dbReference>
<dbReference type="CDD" id="cd16321">
    <property type="entry name" value="MraZ_C"/>
    <property type="match status" value="1"/>
</dbReference>
<dbReference type="CDD" id="cd16320">
    <property type="entry name" value="MraZ_N"/>
    <property type="match status" value="1"/>
</dbReference>
<dbReference type="FunFam" id="3.40.1550.20:FF:000002">
    <property type="entry name" value="Transcriptional regulator MraZ"/>
    <property type="match status" value="1"/>
</dbReference>
<dbReference type="Gene3D" id="3.40.1550.20">
    <property type="entry name" value="Transcriptional regulator MraZ domain"/>
    <property type="match status" value="1"/>
</dbReference>
<dbReference type="HAMAP" id="MF_01008">
    <property type="entry name" value="MraZ"/>
    <property type="match status" value="1"/>
</dbReference>
<dbReference type="InterPro" id="IPR003444">
    <property type="entry name" value="MraZ"/>
</dbReference>
<dbReference type="InterPro" id="IPR035644">
    <property type="entry name" value="MraZ_C"/>
</dbReference>
<dbReference type="InterPro" id="IPR020603">
    <property type="entry name" value="MraZ_dom"/>
</dbReference>
<dbReference type="InterPro" id="IPR035642">
    <property type="entry name" value="MraZ_N"/>
</dbReference>
<dbReference type="InterPro" id="IPR038619">
    <property type="entry name" value="MraZ_sf"/>
</dbReference>
<dbReference type="InterPro" id="IPR007159">
    <property type="entry name" value="SpoVT-AbrB_dom"/>
</dbReference>
<dbReference type="InterPro" id="IPR037914">
    <property type="entry name" value="SpoVT-AbrB_sf"/>
</dbReference>
<dbReference type="NCBIfam" id="TIGR00242">
    <property type="entry name" value="division/cell wall cluster transcriptional repressor MraZ"/>
    <property type="match status" value="1"/>
</dbReference>
<dbReference type="PANTHER" id="PTHR34701">
    <property type="entry name" value="TRANSCRIPTIONAL REGULATOR MRAZ"/>
    <property type="match status" value="1"/>
</dbReference>
<dbReference type="PANTHER" id="PTHR34701:SF1">
    <property type="entry name" value="TRANSCRIPTIONAL REGULATOR MRAZ"/>
    <property type="match status" value="1"/>
</dbReference>
<dbReference type="Pfam" id="PF02381">
    <property type="entry name" value="MraZ"/>
    <property type="match status" value="2"/>
</dbReference>
<dbReference type="SUPFAM" id="SSF89447">
    <property type="entry name" value="AbrB/MazE/MraZ-like"/>
    <property type="match status" value="1"/>
</dbReference>
<dbReference type="PROSITE" id="PS51740">
    <property type="entry name" value="SPOVT_ABRB"/>
    <property type="match status" value="2"/>
</dbReference>
<evidence type="ECO:0000255" key="1">
    <source>
        <dbReference type="HAMAP-Rule" id="MF_01008"/>
    </source>
</evidence>
<evidence type="ECO:0000255" key="2">
    <source>
        <dbReference type="PROSITE-ProRule" id="PRU01076"/>
    </source>
</evidence>
<sequence>MLIGEYKHVVDSKGRIILPSKFREELGERFILTKGLDNCLFGYSLKEWGVLEEKLKKLPLTSKEARTFLRFFFAGACECEVDKQGRVLIPQNLREYAGIQKEVFIIGVMTRIEIWSENNWLKEMTNENLSVDRIAQKMEELGI</sequence>
<gene>
    <name evidence="1" type="primary">mraZ</name>
    <name type="ordered locus">Athe_0769</name>
</gene>
<reference key="1">
    <citation type="submission" date="2009-01" db="EMBL/GenBank/DDBJ databases">
        <title>Complete sequence of chromosome of Caldicellulosiruptor becscii DSM 6725.</title>
        <authorList>
            <person name="Lucas S."/>
            <person name="Copeland A."/>
            <person name="Lapidus A."/>
            <person name="Glavina del Rio T."/>
            <person name="Tice H."/>
            <person name="Bruce D."/>
            <person name="Goodwin L."/>
            <person name="Pitluck S."/>
            <person name="Sims D."/>
            <person name="Meincke L."/>
            <person name="Brettin T."/>
            <person name="Detter J.C."/>
            <person name="Han C."/>
            <person name="Larimer F."/>
            <person name="Land M."/>
            <person name="Hauser L."/>
            <person name="Kyrpides N."/>
            <person name="Ovchinnikova G."/>
            <person name="Kataeva I."/>
            <person name="Adams M.W.W."/>
        </authorList>
    </citation>
    <scope>NUCLEOTIDE SEQUENCE [LARGE SCALE GENOMIC DNA]</scope>
    <source>
        <strain>ATCC BAA-1888 / DSM 6725 / KCTC 15123 / Z-1320</strain>
    </source>
</reference>